<accession>B1IGZ7</accession>
<evidence type="ECO:0000255" key="1">
    <source>
        <dbReference type="HAMAP-Rule" id="MF_00083"/>
    </source>
</evidence>
<protein>
    <recommendedName>
        <fullName evidence="1">Peptidyl-tRNA hydrolase</fullName>
        <shortName evidence="1">Pth</shortName>
        <ecNumber evidence="1">3.1.1.29</ecNumber>
    </recommendedName>
</protein>
<proteinExistence type="inferred from homology"/>
<organism>
    <name type="scientific">Clostridium botulinum (strain Okra / Type B1)</name>
    <dbReference type="NCBI Taxonomy" id="498213"/>
    <lineage>
        <taxon>Bacteria</taxon>
        <taxon>Bacillati</taxon>
        <taxon>Bacillota</taxon>
        <taxon>Clostridia</taxon>
        <taxon>Eubacteriales</taxon>
        <taxon>Clostridiaceae</taxon>
        <taxon>Clostridium</taxon>
    </lineage>
</organism>
<keyword id="KW-0963">Cytoplasm</keyword>
<keyword id="KW-0378">Hydrolase</keyword>
<keyword id="KW-0694">RNA-binding</keyword>
<keyword id="KW-0820">tRNA-binding</keyword>
<feature type="chain" id="PRO_1000092929" description="Peptidyl-tRNA hydrolase">
    <location>
        <begin position="1"/>
        <end position="189"/>
    </location>
</feature>
<feature type="active site" description="Proton acceptor" evidence="1">
    <location>
        <position position="19"/>
    </location>
</feature>
<feature type="binding site" evidence="1">
    <location>
        <position position="14"/>
    </location>
    <ligand>
        <name>tRNA</name>
        <dbReference type="ChEBI" id="CHEBI:17843"/>
    </ligand>
</feature>
<feature type="binding site" evidence="1">
    <location>
        <position position="64"/>
    </location>
    <ligand>
        <name>tRNA</name>
        <dbReference type="ChEBI" id="CHEBI:17843"/>
    </ligand>
</feature>
<feature type="binding site" evidence="1">
    <location>
        <position position="66"/>
    </location>
    <ligand>
        <name>tRNA</name>
        <dbReference type="ChEBI" id="CHEBI:17843"/>
    </ligand>
</feature>
<feature type="binding site" evidence="1">
    <location>
        <position position="112"/>
    </location>
    <ligand>
        <name>tRNA</name>
        <dbReference type="ChEBI" id="CHEBI:17843"/>
    </ligand>
</feature>
<feature type="site" description="Discriminates between blocked and unblocked aminoacyl-tRNA" evidence="1">
    <location>
        <position position="9"/>
    </location>
</feature>
<feature type="site" description="Stabilizes the basic form of H active site to accept a proton" evidence="1">
    <location>
        <position position="91"/>
    </location>
</feature>
<gene>
    <name evidence="1" type="primary">pth</name>
    <name type="ordered locus">CLD_0943</name>
</gene>
<comment type="function">
    <text evidence="1">Hydrolyzes ribosome-free peptidyl-tRNAs (with 1 or more amino acids incorporated), which drop off the ribosome during protein synthesis, or as a result of ribosome stalling.</text>
</comment>
<comment type="function">
    <text evidence="1">Catalyzes the release of premature peptidyl moieties from peptidyl-tRNA molecules trapped in stalled 50S ribosomal subunits, and thus maintains levels of free tRNAs and 50S ribosomes.</text>
</comment>
<comment type="catalytic activity">
    <reaction evidence="1">
        <text>an N-acyl-L-alpha-aminoacyl-tRNA + H2O = an N-acyl-L-amino acid + a tRNA + H(+)</text>
        <dbReference type="Rhea" id="RHEA:54448"/>
        <dbReference type="Rhea" id="RHEA-COMP:10123"/>
        <dbReference type="Rhea" id="RHEA-COMP:13883"/>
        <dbReference type="ChEBI" id="CHEBI:15377"/>
        <dbReference type="ChEBI" id="CHEBI:15378"/>
        <dbReference type="ChEBI" id="CHEBI:59874"/>
        <dbReference type="ChEBI" id="CHEBI:78442"/>
        <dbReference type="ChEBI" id="CHEBI:138191"/>
        <dbReference type="EC" id="3.1.1.29"/>
    </reaction>
</comment>
<comment type="subunit">
    <text evidence="1">Monomer.</text>
</comment>
<comment type="subcellular location">
    <subcellularLocation>
        <location evidence="1">Cytoplasm</location>
    </subcellularLocation>
</comment>
<comment type="similarity">
    <text evidence="1">Belongs to the PTH family.</text>
</comment>
<name>PTH_CLOBK</name>
<sequence>MYLVVGLGNIGKEYKKTRHNIGFDVVDIIAEKYNIEINRQKFKGSYGEGRIGNEKIILLKPSTYMNLSGESVIEAANFYKIDKENIIVIYDDMSIDIGKLRVRGKGSAGGHNGIKNIIQHLNSDIFPRVRVGIGQPDENVVNYVLGKFSKDQREIIDKVLAMSAKACISIVEDGVTEAMNKYNGVKIEV</sequence>
<reference key="1">
    <citation type="journal article" date="2007" name="PLoS ONE">
        <title>Analysis of the neurotoxin complex genes in Clostridium botulinum A1-A4 and B1 strains: BoNT/A3, /Ba4 and /B1 clusters are located within plasmids.</title>
        <authorList>
            <person name="Smith T.J."/>
            <person name="Hill K.K."/>
            <person name="Foley B.T."/>
            <person name="Detter J.C."/>
            <person name="Munk A.C."/>
            <person name="Bruce D.C."/>
            <person name="Doggett N.A."/>
            <person name="Smith L.A."/>
            <person name="Marks J.D."/>
            <person name="Xie G."/>
            <person name="Brettin T.S."/>
        </authorList>
    </citation>
    <scope>NUCLEOTIDE SEQUENCE [LARGE SCALE GENOMIC DNA]</scope>
    <source>
        <strain>Okra / Type B1</strain>
    </source>
</reference>
<dbReference type="EC" id="3.1.1.29" evidence="1"/>
<dbReference type="EMBL" id="CP000939">
    <property type="protein sequence ID" value="ACA44380.1"/>
    <property type="molecule type" value="Genomic_DNA"/>
</dbReference>
<dbReference type="RefSeq" id="WP_003399425.1">
    <property type="nucleotide sequence ID" value="NC_010516.1"/>
</dbReference>
<dbReference type="SMR" id="B1IGZ7"/>
<dbReference type="KEGG" id="cbb:CLD_0943"/>
<dbReference type="HOGENOM" id="CLU_062456_4_1_9"/>
<dbReference type="Proteomes" id="UP000008541">
    <property type="component" value="Chromosome"/>
</dbReference>
<dbReference type="GO" id="GO:0005737">
    <property type="term" value="C:cytoplasm"/>
    <property type="evidence" value="ECO:0007669"/>
    <property type="project" value="UniProtKB-SubCell"/>
</dbReference>
<dbReference type="GO" id="GO:0004045">
    <property type="term" value="F:peptidyl-tRNA hydrolase activity"/>
    <property type="evidence" value="ECO:0007669"/>
    <property type="project" value="UniProtKB-UniRule"/>
</dbReference>
<dbReference type="GO" id="GO:0000049">
    <property type="term" value="F:tRNA binding"/>
    <property type="evidence" value="ECO:0007669"/>
    <property type="project" value="UniProtKB-UniRule"/>
</dbReference>
<dbReference type="GO" id="GO:0006515">
    <property type="term" value="P:protein quality control for misfolded or incompletely synthesized proteins"/>
    <property type="evidence" value="ECO:0007669"/>
    <property type="project" value="UniProtKB-UniRule"/>
</dbReference>
<dbReference type="GO" id="GO:0072344">
    <property type="term" value="P:rescue of stalled ribosome"/>
    <property type="evidence" value="ECO:0007669"/>
    <property type="project" value="UniProtKB-UniRule"/>
</dbReference>
<dbReference type="CDD" id="cd00462">
    <property type="entry name" value="PTH"/>
    <property type="match status" value="1"/>
</dbReference>
<dbReference type="FunFam" id="3.40.50.1470:FF:000001">
    <property type="entry name" value="Peptidyl-tRNA hydrolase"/>
    <property type="match status" value="1"/>
</dbReference>
<dbReference type="Gene3D" id="3.40.50.1470">
    <property type="entry name" value="Peptidyl-tRNA hydrolase"/>
    <property type="match status" value="1"/>
</dbReference>
<dbReference type="HAMAP" id="MF_00083">
    <property type="entry name" value="Pept_tRNA_hydro_bact"/>
    <property type="match status" value="1"/>
</dbReference>
<dbReference type="InterPro" id="IPR001328">
    <property type="entry name" value="Pept_tRNA_hydro"/>
</dbReference>
<dbReference type="InterPro" id="IPR018171">
    <property type="entry name" value="Pept_tRNA_hydro_CS"/>
</dbReference>
<dbReference type="InterPro" id="IPR036416">
    <property type="entry name" value="Pept_tRNA_hydro_sf"/>
</dbReference>
<dbReference type="NCBIfam" id="TIGR00447">
    <property type="entry name" value="pth"/>
    <property type="match status" value="1"/>
</dbReference>
<dbReference type="PANTHER" id="PTHR17224">
    <property type="entry name" value="PEPTIDYL-TRNA HYDROLASE"/>
    <property type="match status" value="1"/>
</dbReference>
<dbReference type="PANTHER" id="PTHR17224:SF1">
    <property type="entry name" value="PEPTIDYL-TRNA HYDROLASE"/>
    <property type="match status" value="1"/>
</dbReference>
<dbReference type="Pfam" id="PF01195">
    <property type="entry name" value="Pept_tRNA_hydro"/>
    <property type="match status" value="1"/>
</dbReference>
<dbReference type="SUPFAM" id="SSF53178">
    <property type="entry name" value="Peptidyl-tRNA hydrolase-like"/>
    <property type="match status" value="1"/>
</dbReference>
<dbReference type="PROSITE" id="PS01195">
    <property type="entry name" value="PEPT_TRNA_HYDROL_1"/>
    <property type="match status" value="1"/>
</dbReference>
<dbReference type="PROSITE" id="PS01196">
    <property type="entry name" value="PEPT_TRNA_HYDROL_2"/>
    <property type="match status" value="1"/>
</dbReference>